<dbReference type="EC" id="3.5.1.n3" evidence="1"/>
<dbReference type="EMBL" id="AP008232">
    <property type="protein sequence ID" value="BAE75117.1"/>
    <property type="molecule type" value="Genomic_DNA"/>
</dbReference>
<dbReference type="RefSeq" id="WP_011411789.1">
    <property type="nucleotide sequence ID" value="NC_007712.1"/>
</dbReference>
<dbReference type="SMR" id="Q2NRV8"/>
<dbReference type="STRING" id="343509.SG1842"/>
<dbReference type="KEGG" id="sgl:SG1842"/>
<dbReference type="eggNOG" id="COG0726">
    <property type="taxonomic scope" value="Bacteria"/>
</dbReference>
<dbReference type="HOGENOM" id="CLU_084199_0_0_6"/>
<dbReference type="OrthoDB" id="5589314at2"/>
<dbReference type="BioCyc" id="SGLO343509:SGP1_RS16680-MONOMER"/>
<dbReference type="UniPathway" id="UPA00030"/>
<dbReference type="UniPathway" id="UPA00036">
    <property type="reaction ID" value="UER00496"/>
</dbReference>
<dbReference type="Proteomes" id="UP000001932">
    <property type="component" value="Chromosome"/>
</dbReference>
<dbReference type="GO" id="GO:0016020">
    <property type="term" value="C:membrane"/>
    <property type="evidence" value="ECO:0007669"/>
    <property type="project" value="GOC"/>
</dbReference>
<dbReference type="GO" id="GO:0016811">
    <property type="term" value="F:hydrolase activity, acting on carbon-nitrogen (but not peptide) bonds, in linear amides"/>
    <property type="evidence" value="ECO:0007669"/>
    <property type="project" value="UniProtKB-UniRule"/>
</dbReference>
<dbReference type="GO" id="GO:0036108">
    <property type="term" value="P:4-amino-4-deoxy-alpha-L-arabinopyranosyl undecaprenyl phosphate biosynthetic process"/>
    <property type="evidence" value="ECO:0007669"/>
    <property type="project" value="UniProtKB-UniRule"/>
</dbReference>
<dbReference type="GO" id="GO:0009245">
    <property type="term" value="P:lipid A biosynthetic process"/>
    <property type="evidence" value="ECO:0007669"/>
    <property type="project" value="UniProtKB-UniRule"/>
</dbReference>
<dbReference type="GO" id="GO:0009103">
    <property type="term" value="P:lipopolysaccharide biosynthetic process"/>
    <property type="evidence" value="ECO:0007669"/>
    <property type="project" value="UniProtKB-UniRule"/>
</dbReference>
<dbReference type="GO" id="GO:0046677">
    <property type="term" value="P:response to antibiotic"/>
    <property type="evidence" value="ECO:0007669"/>
    <property type="project" value="UniProtKB-KW"/>
</dbReference>
<dbReference type="Gene3D" id="3.20.20.370">
    <property type="entry name" value="Glycoside hydrolase/deacetylase"/>
    <property type="match status" value="1"/>
</dbReference>
<dbReference type="HAMAP" id="MF_01870">
    <property type="entry name" value="ArnD"/>
    <property type="match status" value="1"/>
</dbReference>
<dbReference type="InterPro" id="IPR023557">
    <property type="entry name" value="ArnD"/>
</dbReference>
<dbReference type="InterPro" id="IPR011330">
    <property type="entry name" value="Glyco_hydro/deAcase_b/a-brl"/>
</dbReference>
<dbReference type="InterPro" id="IPR002509">
    <property type="entry name" value="NODB_dom"/>
</dbReference>
<dbReference type="InterPro" id="IPR050248">
    <property type="entry name" value="Polysacc_deacetylase_ArnD"/>
</dbReference>
<dbReference type="NCBIfam" id="NF011923">
    <property type="entry name" value="PRK15394.1"/>
    <property type="match status" value="1"/>
</dbReference>
<dbReference type="PANTHER" id="PTHR10587:SF137">
    <property type="entry name" value="4-DEOXY-4-FORMAMIDO-L-ARABINOSE-PHOSPHOUNDECAPRENOL DEFORMYLASE ARND-RELATED"/>
    <property type="match status" value="1"/>
</dbReference>
<dbReference type="PANTHER" id="PTHR10587">
    <property type="entry name" value="GLYCOSYL TRANSFERASE-RELATED"/>
    <property type="match status" value="1"/>
</dbReference>
<dbReference type="Pfam" id="PF01522">
    <property type="entry name" value="Polysacc_deac_1"/>
    <property type="match status" value="1"/>
</dbReference>
<dbReference type="SUPFAM" id="SSF88713">
    <property type="entry name" value="Glycoside hydrolase/deacetylase"/>
    <property type="match status" value="1"/>
</dbReference>
<dbReference type="PROSITE" id="PS51677">
    <property type="entry name" value="NODB"/>
    <property type="match status" value="1"/>
</dbReference>
<name>ARND_SODGM</name>
<protein>
    <recommendedName>
        <fullName evidence="1">Probable 4-deoxy-4-formamido-L-arabinose-phosphoundecaprenol deformylase ArnD</fullName>
        <ecNumber evidence="1">3.5.1.n3</ecNumber>
    </recommendedName>
</protein>
<comment type="function">
    <text evidence="1">Catalyzes the deformylation of 4-deoxy-4-formamido-L-arabinose-phosphoundecaprenol to 4-amino-4-deoxy-L-arabinose-phosphoundecaprenol. The modified arabinose is attached to lipid A and is required for resistance to polymyxin and cationic antimicrobial peptides.</text>
</comment>
<comment type="catalytic activity">
    <reaction evidence="1">
        <text>4-deoxy-4-formamido-alpha-L-arabinopyranosyl di-trans,octa-cis-undecaprenyl phosphate + H2O = 4-amino-4-deoxy-alpha-L-arabinopyranosyl di-trans,octa-cis-undecaprenyl phosphate + formate</text>
        <dbReference type="Rhea" id="RHEA:27734"/>
        <dbReference type="ChEBI" id="CHEBI:15377"/>
        <dbReference type="ChEBI" id="CHEBI:15740"/>
        <dbReference type="ChEBI" id="CHEBI:58909"/>
        <dbReference type="ChEBI" id="CHEBI:60463"/>
        <dbReference type="EC" id="3.5.1.n3"/>
    </reaction>
</comment>
<comment type="pathway">
    <text evidence="1">Glycolipid biosynthesis; 4-amino-4-deoxy-alpha-L-arabinose undecaprenyl phosphate biosynthesis; 4-amino-4-deoxy-alpha-L-arabinose undecaprenyl phosphate from UDP-4-deoxy-4-formamido-beta-L-arabinose and undecaprenyl phosphate: step 2/2.</text>
</comment>
<comment type="pathway">
    <text evidence="1">Bacterial outer membrane biogenesis; lipopolysaccharide biosynthesis.</text>
</comment>
<comment type="similarity">
    <text evidence="1">Belongs to the polysaccharide deacetylase family. ArnD deformylase subfamily.</text>
</comment>
<accession>Q2NRV8</accession>
<sequence>MKNVGLRIDVDTWRGTRDGMPRLLELLAAQQIQATFFFSVGPDNMGRHLWRLAKPQFLLKMLRSRAASLYGWDILLAGTAWPGRKIGQGLAAQIRAAAADHEVGLHAWDHFAWQTWAGVWSERQLTEQIRLARDALTAIIERPVTCSAVAGWRADDRVVQAKQPFDFHYNSDCRGTEPFRPLLANGAFGAVQIPVTQPTFDEAIGQTTTRAGYNHFILDSIKADRGTPVYTIHAEVEGIALSGMFQELLSMAVAEGIRFCPLRELLPQDTAALPVGQVVRGEIPGREGWVGCQRLLK</sequence>
<organism>
    <name type="scientific">Sodalis glossinidius (strain morsitans)</name>
    <dbReference type="NCBI Taxonomy" id="343509"/>
    <lineage>
        <taxon>Bacteria</taxon>
        <taxon>Pseudomonadati</taxon>
        <taxon>Pseudomonadota</taxon>
        <taxon>Gammaproteobacteria</taxon>
        <taxon>Enterobacterales</taxon>
        <taxon>Bruguierivoracaceae</taxon>
        <taxon>Sodalis</taxon>
    </lineage>
</organism>
<keyword id="KW-0046">Antibiotic resistance</keyword>
<keyword id="KW-0378">Hydrolase</keyword>
<keyword id="KW-0441">Lipid A biosynthesis</keyword>
<keyword id="KW-0444">Lipid biosynthesis</keyword>
<keyword id="KW-0443">Lipid metabolism</keyword>
<keyword id="KW-0448">Lipopolysaccharide biosynthesis</keyword>
<feature type="chain" id="PRO_0000383548" description="Probable 4-deoxy-4-formamido-L-arabinose-phosphoundecaprenol deformylase ArnD">
    <location>
        <begin position="1"/>
        <end position="297"/>
    </location>
</feature>
<feature type="domain" description="NodB homology" evidence="1">
    <location>
        <begin position="2"/>
        <end position="260"/>
    </location>
</feature>
<reference key="1">
    <citation type="journal article" date="2006" name="Genome Res.">
        <title>Massive genome erosion and functional adaptations provide insights into the symbiotic lifestyle of Sodalis glossinidius in the tsetse host.</title>
        <authorList>
            <person name="Toh H."/>
            <person name="Weiss B.L."/>
            <person name="Perkin S.A.H."/>
            <person name="Yamashita A."/>
            <person name="Oshima K."/>
            <person name="Hattori M."/>
            <person name="Aksoy S."/>
        </authorList>
    </citation>
    <scope>NUCLEOTIDE SEQUENCE [LARGE SCALE GENOMIC DNA]</scope>
    <source>
        <strain>morsitans</strain>
    </source>
</reference>
<proteinExistence type="inferred from homology"/>
<gene>
    <name evidence="1" type="primary">arnD</name>
    <name type="ordered locus">SG1842</name>
</gene>
<evidence type="ECO:0000255" key="1">
    <source>
        <dbReference type="HAMAP-Rule" id="MF_01870"/>
    </source>
</evidence>